<name>TRUD_ECOLU</name>
<organism>
    <name type="scientific">Escherichia coli O17:K52:H18 (strain UMN026 / ExPEC)</name>
    <dbReference type="NCBI Taxonomy" id="585056"/>
    <lineage>
        <taxon>Bacteria</taxon>
        <taxon>Pseudomonadati</taxon>
        <taxon>Pseudomonadota</taxon>
        <taxon>Gammaproteobacteria</taxon>
        <taxon>Enterobacterales</taxon>
        <taxon>Enterobacteriaceae</taxon>
        <taxon>Escherichia</taxon>
    </lineage>
</organism>
<evidence type="ECO:0000255" key="1">
    <source>
        <dbReference type="HAMAP-Rule" id="MF_01082"/>
    </source>
</evidence>
<sequence length="349" mass="39105">MIEFDNLTYLHGKPQGTGLLKANPEDFVVVEDLGFEPDGEGEHILVRILKNGCNTRFVADALAKFLKIHAREVSFAGQKDKHAVTEQWLCARVPGKEMPDLSAFQLEGCQVLEYVRHKRKLRLGALKGNAFTLVLREVSNRDDVEQRLIDICVKGVPNYFGAQRFGIGGSNLQGALRWAQTNTPVRDRNKRSFWLSAARSALFNQIVAERLKKADVNQVVDGDALQLAGRGSWFVATTEELAELQRRVNDKELMITAALPGSGEWGTQREALAFEQAAVAAETELQALLVREKVEAARRAMLLYPQQLSWNWWDDVTVEIRFWLPAGSFATSVVRELINTTGDYAHIAE</sequence>
<keyword id="KW-0413">Isomerase</keyword>
<keyword id="KW-0819">tRNA processing</keyword>
<feature type="chain" id="PRO_1000136834" description="tRNA pseudouridine synthase D">
    <location>
        <begin position="1"/>
        <end position="349"/>
    </location>
</feature>
<feature type="domain" description="TRUD" evidence="1">
    <location>
        <begin position="155"/>
        <end position="303"/>
    </location>
</feature>
<feature type="active site" description="Nucleophile" evidence="1">
    <location>
        <position position="80"/>
    </location>
</feature>
<feature type="binding site" evidence="1">
    <location>
        <position position="27"/>
    </location>
    <ligand>
        <name>substrate</name>
    </ligand>
</feature>
<feature type="binding site" evidence="1">
    <location>
        <position position="129"/>
    </location>
    <ligand>
        <name>substrate</name>
    </ligand>
</feature>
<feature type="binding site" evidence="1">
    <location>
        <position position="329"/>
    </location>
    <ligand>
        <name>substrate</name>
    </ligand>
</feature>
<gene>
    <name evidence="1" type="primary">truD</name>
    <name type="ordered locus">ECUMN_3069</name>
</gene>
<comment type="function">
    <text evidence="1">Responsible for synthesis of pseudouridine from uracil-13 in transfer RNAs.</text>
</comment>
<comment type="catalytic activity">
    <reaction evidence="1">
        <text>uridine(13) in tRNA = pseudouridine(13) in tRNA</text>
        <dbReference type="Rhea" id="RHEA:42540"/>
        <dbReference type="Rhea" id="RHEA-COMP:10105"/>
        <dbReference type="Rhea" id="RHEA-COMP:10106"/>
        <dbReference type="ChEBI" id="CHEBI:65314"/>
        <dbReference type="ChEBI" id="CHEBI:65315"/>
        <dbReference type="EC" id="5.4.99.27"/>
    </reaction>
</comment>
<comment type="similarity">
    <text evidence="1">Belongs to the pseudouridine synthase TruD family.</text>
</comment>
<protein>
    <recommendedName>
        <fullName evidence="1">tRNA pseudouridine synthase D</fullName>
        <ecNumber evidence="1">5.4.99.27</ecNumber>
    </recommendedName>
    <alternativeName>
        <fullName evidence="1">tRNA pseudouridine(13) synthase</fullName>
    </alternativeName>
    <alternativeName>
        <fullName evidence="1">tRNA pseudouridylate synthase D</fullName>
    </alternativeName>
    <alternativeName>
        <fullName evidence="1">tRNA-uridine isomerase D</fullName>
    </alternativeName>
</protein>
<accession>B7N6X5</accession>
<reference key="1">
    <citation type="journal article" date="2009" name="PLoS Genet.">
        <title>Organised genome dynamics in the Escherichia coli species results in highly diverse adaptive paths.</title>
        <authorList>
            <person name="Touchon M."/>
            <person name="Hoede C."/>
            <person name="Tenaillon O."/>
            <person name="Barbe V."/>
            <person name="Baeriswyl S."/>
            <person name="Bidet P."/>
            <person name="Bingen E."/>
            <person name="Bonacorsi S."/>
            <person name="Bouchier C."/>
            <person name="Bouvet O."/>
            <person name="Calteau A."/>
            <person name="Chiapello H."/>
            <person name="Clermont O."/>
            <person name="Cruveiller S."/>
            <person name="Danchin A."/>
            <person name="Diard M."/>
            <person name="Dossat C."/>
            <person name="Karoui M.E."/>
            <person name="Frapy E."/>
            <person name="Garry L."/>
            <person name="Ghigo J.M."/>
            <person name="Gilles A.M."/>
            <person name="Johnson J."/>
            <person name="Le Bouguenec C."/>
            <person name="Lescat M."/>
            <person name="Mangenot S."/>
            <person name="Martinez-Jehanne V."/>
            <person name="Matic I."/>
            <person name="Nassif X."/>
            <person name="Oztas S."/>
            <person name="Petit M.A."/>
            <person name="Pichon C."/>
            <person name="Rouy Z."/>
            <person name="Ruf C.S."/>
            <person name="Schneider D."/>
            <person name="Tourret J."/>
            <person name="Vacherie B."/>
            <person name="Vallenet D."/>
            <person name="Medigue C."/>
            <person name="Rocha E.P.C."/>
            <person name="Denamur E."/>
        </authorList>
    </citation>
    <scope>NUCLEOTIDE SEQUENCE [LARGE SCALE GENOMIC DNA]</scope>
    <source>
        <strain>UMN026 / ExPEC</strain>
    </source>
</reference>
<proteinExistence type="inferred from homology"/>
<dbReference type="EC" id="5.4.99.27" evidence="1"/>
<dbReference type="EMBL" id="CU928163">
    <property type="protein sequence ID" value="CAR14236.1"/>
    <property type="molecule type" value="Genomic_DNA"/>
</dbReference>
<dbReference type="RefSeq" id="WP_000568953.1">
    <property type="nucleotide sequence ID" value="NC_011751.1"/>
</dbReference>
<dbReference type="RefSeq" id="YP_002413758.1">
    <property type="nucleotide sequence ID" value="NC_011751.1"/>
</dbReference>
<dbReference type="SMR" id="B7N6X5"/>
<dbReference type="STRING" id="585056.ECUMN_3069"/>
<dbReference type="KEGG" id="eum:ECUMN_3069"/>
<dbReference type="PATRIC" id="fig|585056.7.peg.3245"/>
<dbReference type="HOGENOM" id="CLU_005281_4_0_6"/>
<dbReference type="Proteomes" id="UP000007097">
    <property type="component" value="Chromosome"/>
</dbReference>
<dbReference type="GO" id="GO:0005829">
    <property type="term" value="C:cytosol"/>
    <property type="evidence" value="ECO:0007669"/>
    <property type="project" value="TreeGrafter"/>
</dbReference>
<dbReference type="GO" id="GO:0003723">
    <property type="term" value="F:RNA binding"/>
    <property type="evidence" value="ECO:0007669"/>
    <property type="project" value="InterPro"/>
</dbReference>
<dbReference type="GO" id="GO:0160150">
    <property type="term" value="F:tRNA pseudouridine(13) synthase activity"/>
    <property type="evidence" value="ECO:0007669"/>
    <property type="project" value="UniProtKB-EC"/>
</dbReference>
<dbReference type="GO" id="GO:0031119">
    <property type="term" value="P:tRNA pseudouridine synthesis"/>
    <property type="evidence" value="ECO:0007669"/>
    <property type="project" value="UniProtKB-UniRule"/>
</dbReference>
<dbReference type="CDD" id="cd02575">
    <property type="entry name" value="PseudoU_synth_EcTruD"/>
    <property type="match status" value="1"/>
</dbReference>
<dbReference type="FunFam" id="3.30.2340.10:FF:000001">
    <property type="entry name" value="tRNA pseudouridine synthase D"/>
    <property type="match status" value="1"/>
</dbReference>
<dbReference type="FunFam" id="3.30.2350.20:FF:000001">
    <property type="entry name" value="tRNA pseudouridine synthase D"/>
    <property type="match status" value="1"/>
</dbReference>
<dbReference type="Gene3D" id="3.30.2350.20">
    <property type="entry name" value="TruD, catalytic domain"/>
    <property type="match status" value="1"/>
</dbReference>
<dbReference type="Gene3D" id="3.30.2340.10">
    <property type="entry name" value="TruD, insertion domain"/>
    <property type="match status" value="1"/>
</dbReference>
<dbReference type="HAMAP" id="MF_01082">
    <property type="entry name" value="TruD"/>
    <property type="match status" value="1"/>
</dbReference>
<dbReference type="InterPro" id="IPR020103">
    <property type="entry name" value="PsdUridine_synth_cat_dom_sf"/>
</dbReference>
<dbReference type="InterPro" id="IPR001656">
    <property type="entry name" value="PsdUridine_synth_TruD"/>
</dbReference>
<dbReference type="InterPro" id="IPR020119">
    <property type="entry name" value="PsdUridine_synth_TruD_CS"/>
</dbReference>
<dbReference type="InterPro" id="IPR011760">
    <property type="entry name" value="PsdUridine_synth_TruD_insert"/>
</dbReference>
<dbReference type="InterPro" id="IPR042214">
    <property type="entry name" value="TruD_catalytic"/>
</dbReference>
<dbReference type="InterPro" id="IPR043165">
    <property type="entry name" value="TruD_insert_sf"/>
</dbReference>
<dbReference type="InterPro" id="IPR050170">
    <property type="entry name" value="TruD_pseudoU_synthase"/>
</dbReference>
<dbReference type="NCBIfam" id="NF002155">
    <property type="entry name" value="PRK00984.1-4"/>
    <property type="match status" value="1"/>
</dbReference>
<dbReference type="NCBIfam" id="TIGR00094">
    <property type="entry name" value="tRNA_TruD_broad"/>
    <property type="match status" value="1"/>
</dbReference>
<dbReference type="PANTHER" id="PTHR47811">
    <property type="entry name" value="TRNA PSEUDOURIDINE SYNTHASE D"/>
    <property type="match status" value="1"/>
</dbReference>
<dbReference type="PANTHER" id="PTHR47811:SF1">
    <property type="entry name" value="TRNA PSEUDOURIDINE SYNTHASE D"/>
    <property type="match status" value="1"/>
</dbReference>
<dbReference type="Pfam" id="PF01142">
    <property type="entry name" value="TruD"/>
    <property type="match status" value="2"/>
</dbReference>
<dbReference type="SUPFAM" id="SSF55120">
    <property type="entry name" value="Pseudouridine synthase"/>
    <property type="match status" value="1"/>
</dbReference>
<dbReference type="PROSITE" id="PS50984">
    <property type="entry name" value="TRUD"/>
    <property type="match status" value="1"/>
</dbReference>
<dbReference type="PROSITE" id="PS01268">
    <property type="entry name" value="UPF0024"/>
    <property type="match status" value="1"/>
</dbReference>